<organism>
    <name type="scientific">Legionella pneumophila subsp. pneumophila (strain Philadelphia 1 / ATCC 33152 / DSM 7513)</name>
    <dbReference type="NCBI Taxonomy" id="272624"/>
    <lineage>
        <taxon>Bacteria</taxon>
        <taxon>Pseudomonadati</taxon>
        <taxon>Pseudomonadota</taxon>
        <taxon>Gammaproteobacteria</taxon>
        <taxon>Legionellales</taxon>
        <taxon>Legionellaceae</taxon>
        <taxon>Legionella</taxon>
    </lineage>
</organism>
<keyword id="KW-0648">Protein biosynthesis</keyword>
<keyword id="KW-1185">Reference proteome</keyword>
<keyword id="KW-0808">Transferase</keyword>
<evidence type="ECO:0000255" key="1">
    <source>
        <dbReference type="HAMAP-Rule" id="MF_00182"/>
    </source>
</evidence>
<accession>Q5ZSC5</accession>
<gene>
    <name evidence="1" type="primary">fmt</name>
    <name type="ordered locus">lpg2594</name>
</gene>
<sequence>MNGLTVVFAGTPEFGLPCLDALIQSRHHLKAVYTQPDRPAGRGRKLQESPVKEWAINHQIPVYQPLNFKNQEAVDELSALKPDVMVVIAYGLILPKAVLEIPRLGCINVHASLLPRWRGASPIQHAILHGDAESGVTIMQMDVGLDTGPMLCKAACPVTSSDTAGSLHDKLAKMSVKPLLDVLEALASNSAQFELQNNELATYAGKINKEEARINWHQSAVEIDRKIRAFNPWPVAYTLAGELMLRIHQAKATDIMSTEMPGMILNIDKNGMLVATSDNALLVEKIQFPGAKIISVRDWLNSGKTQLHTGLMLQ</sequence>
<comment type="function">
    <text evidence="1">Attaches a formyl group to the free amino group of methionyl-tRNA(fMet). The formyl group appears to play a dual role in the initiator identity of N-formylmethionyl-tRNA by promoting its recognition by IF2 and preventing the misappropriation of this tRNA by the elongation apparatus.</text>
</comment>
<comment type="catalytic activity">
    <reaction evidence="1">
        <text>L-methionyl-tRNA(fMet) + (6R)-10-formyltetrahydrofolate = N-formyl-L-methionyl-tRNA(fMet) + (6S)-5,6,7,8-tetrahydrofolate + H(+)</text>
        <dbReference type="Rhea" id="RHEA:24380"/>
        <dbReference type="Rhea" id="RHEA-COMP:9952"/>
        <dbReference type="Rhea" id="RHEA-COMP:9953"/>
        <dbReference type="ChEBI" id="CHEBI:15378"/>
        <dbReference type="ChEBI" id="CHEBI:57453"/>
        <dbReference type="ChEBI" id="CHEBI:78530"/>
        <dbReference type="ChEBI" id="CHEBI:78844"/>
        <dbReference type="ChEBI" id="CHEBI:195366"/>
        <dbReference type="EC" id="2.1.2.9"/>
    </reaction>
</comment>
<comment type="similarity">
    <text evidence="1">Belongs to the Fmt family.</text>
</comment>
<dbReference type="EC" id="2.1.2.9" evidence="1"/>
<dbReference type="EMBL" id="AE017354">
    <property type="protein sequence ID" value="AAU28652.1"/>
    <property type="molecule type" value="Genomic_DNA"/>
</dbReference>
<dbReference type="RefSeq" id="WP_010948294.1">
    <property type="nucleotide sequence ID" value="NC_002942.5"/>
</dbReference>
<dbReference type="RefSeq" id="YP_096599.1">
    <property type="nucleotide sequence ID" value="NC_002942.5"/>
</dbReference>
<dbReference type="SMR" id="Q5ZSC5"/>
<dbReference type="STRING" id="272624.lpg2594"/>
<dbReference type="PaxDb" id="272624-lpg2594"/>
<dbReference type="GeneID" id="57036593"/>
<dbReference type="KEGG" id="lpn:lpg2594"/>
<dbReference type="PATRIC" id="fig|272624.6.peg.2766"/>
<dbReference type="eggNOG" id="COG0223">
    <property type="taxonomic scope" value="Bacteria"/>
</dbReference>
<dbReference type="HOGENOM" id="CLU_033347_1_1_6"/>
<dbReference type="OrthoDB" id="9802815at2"/>
<dbReference type="Proteomes" id="UP000000609">
    <property type="component" value="Chromosome"/>
</dbReference>
<dbReference type="GO" id="GO:0005829">
    <property type="term" value="C:cytosol"/>
    <property type="evidence" value="ECO:0007669"/>
    <property type="project" value="TreeGrafter"/>
</dbReference>
<dbReference type="GO" id="GO:0004479">
    <property type="term" value="F:methionyl-tRNA formyltransferase activity"/>
    <property type="evidence" value="ECO:0007669"/>
    <property type="project" value="UniProtKB-UniRule"/>
</dbReference>
<dbReference type="CDD" id="cd08646">
    <property type="entry name" value="FMT_core_Met-tRNA-FMT_N"/>
    <property type="match status" value="1"/>
</dbReference>
<dbReference type="CDD" id="cd08704">
    <property type="entry name" value="Met_tRNA_FMT_C"/>
    <property type="match status" value="1"/>
</dbReference>
<dbReference type="FunFam" id="3.40.50.12230:FF:000001">
    <property type="entry name" value="Methionyl-tRNA formyltransferase"/>
    <property type="match status" value="1"/>
</dbReference>
<dbReference type="FunFam" id="3.40.50.170:FF:000003">
    <property type="entry name" value="Methionyl-tRNA formyltransferase"/>
    <property type="match status" value="1"/>
</dbReference>
<dbReference type="Gene3D" id="3.40.50.12230">
    <property type="match status" value="1"/>
</dbReference>
<dbReference type="HAMAP" id="MF_00182">
    <property type="entry name" value="Formyl_trans"/>
    <property type="match status" value="1"/>
</dbReference>
<dbReference type="InterPro" id="IPR005794">
    <property type="entry name" value="Fmt"/>
</dbReference>
<dbReference type="InterPro" id="IPR005793">
    <property type="entry name" value="Formyl_trans_C"/>
</dbReference>
<dbReference type="InterPro" id="IPR002376">
    <property type="entry name" value="Formyl_transf_N"/>
</dbReference>
<dbReference type="InterPro" id="IPR036477">
    <property type="entry name" value="Formyl_transf_N_sf"/>
</dbReference>
<dbReference type="InterPro" id="IPR011034">
    <property type="entry name" value="Formyl_transferase-like_C_sf"/>
</dbReference>
<dbReference type="InterPro" id="IPR001555">
    <property type="entry name" value="GART_AS"/>
</dbReference>
<dbReference type="InterPro" id="IPR044135">
    <property type="entry name" value="Met-tRNA-FMT_C"/>
</dbReference>
<dbReference type="InterPro" id="IPR041711">
    <property type="entry name" value="Met-tRNA-FMT_N"/>
</dbReference>
<dbReference type="NCBIfam" id="TIGR00460">
    <property type="entry name" value="fmt"/>
    <property type="match status" value="1"/>
</dbReference>
<dbReference type="PANTHER" id="PTHR11138">
    <property type="entry name" value="METHIONYL-TRNA FORMYLTRANSFERASE"/>
    <property type="match status" value="1"/>
</dbReference>
<dbReference type="PANTHER" id="PTHR11138:SF5">
    <property type="entry name" value="METHIONYL-TRNA FORMYLTRANSFERASE, MITOCHONDRIAL"/>
    <property type="match status" value="1"/>
</dbReference>
<dbReference type="Pfam" id="PF02911">
    <property type="entry name" value="Formyl_trans_C"/>
    <property type="match status" value="1"/>
</dbReference>
<dbReference type="Pfam" id="PF00551">
    <property type="entry name" value="Formyl_trans_N"/>
    <property type="match status" value="1"/>
</dbReference>
<dbReference type="SUPFAM" id="SSF50486">
    <property type="entry name" value="FMT C-terminal domain-like"/>
    <property type="match status" value="1"/>
</dbReference>
<dbReference type="SUPFAM" id="SSF53328">
    <property type="entry name" value="Formyltransferase"/>
    <property type="match status" value="1"/>
</dbReference>
<dbReference type="PROSITE" id="PS00373">
    <property type="entry name" value="GART"/>
    <property type="match status" value="1"/>
</dbReference>
<feature type="chain" id="PRO_0000082982" description="Methionyl-tRNA formyltransferase">
    <location>
        <begin position="1"/>
        <end position="314"/>
    </location>
</feature>
<feature type="binding site" evidence="1">
    <location>
        <begin position="112"/>
        <end position="115"/>
    </location>
    <ligand>
        <name>(6S)-5,6,7,8-tetrahydrofolate</name>
        <dbReference type="ChEBI" id="CHEBI:57453"/>
    </ligand>
</feature>
<reference key="1">
    <citation type="journal article" date="2004" name="Science">
        <title>The genomic sequence of the accidental pathogen Legionella pneumophila.</title>
        <authorList>
            <person name="Chien M."/>
            <person name="Morozova I."/>
            <person name="Shi S."/>
            <person name="Sheng H."/>
            <person name="Chen J."/>
            <person name="Gomez S.M."/>
            <person name="Asamani G."/>
            <person name="Hill K."/>
            <person name="Nuara J."/>
            <person name="Feder M."/>
            <person name="Rineer J."/>
            <person name="Greenberg J.J."/>
            <person name="Steshenko V."/>
            <person name="Park S.H."/>
            <person name="Zhao B."/>
            <person name="Teplitskaya E."/>
            <person name="Edwards J.R."/>
            <person name="Pampou S."/>
            <person name="Georghiou A."/>
            <person name="Chou I.-C."/>
            <person name="Iannuccilli W."/>
            <person name="Ulz M.E."/>
            <person name="Kim D.H."/>
            <person name="Geringer-Sameth A."/>
            <person name="Goldsberry C."/>
            <person name="Morozov P."/>
            <person name="Fischer S.G."/>
            <person name="Segal G."/>
            <person name="Qu X."/>
            <person name="Rzhetsky A."/>
            <person name="Zhang P."/>
            <person name="Cayanis E."/>
            <person name="De Jong P.J."/>
            <person name="Ju J."/>
            <person name="Kalachikov S."/>
            <person name="Shuman H.A."/>
            <person name="Russo J.J."/>
        </authorList>
    </citation>
    <scope>NUCLEOTIDE SEQUENCE [LARGE SCALE GENOMIC DNA]</scope>
    <source>
        <strain>Philadelphia 1 / ATCC 33152 / DSM 7513</strain>
    </source>
</reference>
<protein>
    <recommendedName>
        <fullName evidence="1">Methionyl-tRNA formyltransferase</fullName>
        <ecNumber evidence="1">2.1.2.9</ecNumber>
    </recommendedName>
</protein>
<proteinExistence type="inferred from homology"/>
<name>FMT_LEGPH</name>